<reference key="1">
    <citation type="journal article" date="2008" name="Genome Res.">
        <title>Comparative genome analysis of Salmonella enteritidis PT4 and Salmonella gallinarum 287/91 provides insights into evolutionary and host adaptation pathways.</title>
        <authorList>
            <person name="Thomson N.R."/>
            <person name="Clayton D.J."/>
            <person name="Windhorst D."/>
            <person name="Vernikos G."/>
            <person name="Davidson S."/>
            <person name="Churcher C."/>
            <person name="Quail M.A."/>
            <person name="Stevens M."/>
            <person name="Jones M.A."/>
            <person name="Watson M."/>
            <person name="Barron A."/>
            <person name="Layton A."/>
            <person name="Pickard D."/>
            <person name="Kingsley R.A."/>
            <person name="Bignell A."/>
            <person name="Clark L."/>
            <person name="Harris B."/>
            <person name="Ormond D."/>
            <person name="Abdellah Z."/>
            <person name="Brooks K."/>
            <person name="Cherevach I."/>
            <person name="Chillingworth T."/>
            <person name="Woodward J."/>
            <person name="Norberczak H."/>
            <person name="Lord A."/>
            <person name="Arrowsmith C."/>
            <person name="Jagels K."/>
            <person name="Moule S."/>
            <person name="Mungall K."/>
            <person name="Saunders M."/>
            <person name="Whitehead S."/>
            <person name="Chabalgoity J.A."/>
            <person name="Maskell D."/>
            <person name="Humphreys T."/>
            <person name="Roberts M."/>
            <person name="Barrow P.A."/>
            <person name="Dougan G."/>
            <person name="Parkhill J."/>
        </authorList>
    </citation>
    <scope>NUCLEOTIDE SEQUENCE [LARGE SCALE GENOMIC DNA]</scope>
    <source>
        <strain>P125109</strain>
    </source>
</reference>
<accession>B5QU31</accession>
<proteinExistence type="inferred from homology"/>
<feature type="chain" id="PRO_1000197946" description="D-serine dehydratase">
    <location>
        <begin position="1"/>
        <end position="440"/>
    </location>
</feature>
<feature type="modified residue" description="N6-(pyridoxal phosphate)lysine" evidence="1">
    <location>
        <position position="116"/>
    </location>
</feature>
<organism>
    <name type="scientific">Salmonella enteritidis PT4 (strain P125109)</name>
    <dbReference type="NCBI Taxonomy" id="550537"/>
    <lineage>
        <taxon>Bacteria</taxon>
        <taxon>Pseudomonadati</taxon>
        <taxon>Pseudomonadota</taxon>
        <taxon>Gammaproteobacteria</taxon>
        <taxon>Enterobacterales</taxon>
        <taxon>Enterobacteriaceae</taxon>
        <taxon>Salmonella</taxon>
    </lineage>
</organism>
<dbReference type="EC" id="4.3.1.18" evidence="1"/>
<dbReference type="EMBL" id="AM933172">
    <property type="protein sequence ID" value="CAR35195.1"/>
    <property type="molecule type" value="Genomic_DNA"/>
</dbReference>
<dbReference type="RefSeq" id="WP_000427986.1">
    <property type="nucleotide sequence ID" value="NC_011294.1"/>
</dbReference>
<dbReference type="SMR" id="B5QU31"/>
<dbReference type="KEGG" id="set:SEN3619"/>
<dbReference type="HOGENOM" id="CLU_035707_0_0_6"/>
<dbReference type="Proteomes" id="UP000000613">
    <property type="component" value="Chromosome"/>
</dbReference>
<dbReference type="GO" id="GO:0008721">
    <property type="term" value="F:D-serine ammonia-lyase activity"/>
    <property type="evidence" value="ECO:0007669"/>
    <property type="project" value="UniProtKB-EC"/>
</dbReference>
<dbReference type="GO" id="GO:0016836">
    <property type="term" value="F:hydro-lyase activity"/>
    <property type="evidence" value="ECO:0007669"/>
    <property type="project" value="UniProtKB-UniRule"/>
</dbReference>
<dbReference type="GO" id="GO:0030170">
    <property type="term" value="F:pyridoxal phosphate binding"/>
    <property type="evidence" value="ECO:0007669"/>
    <property type="project" value="InterPro"/>
</dbReference>
<dbReference type="GO" id="GO:0036088">
    <property type="term" value="P:D-serine catabolic process"/>
    <property type="evidence" value="ECO:0007669"/>
    <property type="project" value="TreeGrafter"/>
</dbReference>
<dbReference type="GO" id="GO:0009097">
    <property type="term" value="P:isoleucine biosynthetic process"/>
    <property type="evidence" value="ECO:0007669"/>
    <property type="project" value="TreeGrafter"/>
</dbReference>
<dbReference type="CDD" id="cd06447">
    <property type="entry name" value="D-Ser-dehyd"/>
    <property type="match status" value="1"/>
</dbReference>
<dbReference type="FunFam" id="3.40.50.1100:FF:000018">
    <property type="entry name" value="D-serine dehydratase"/>
    <property type="match status" value="1"/>
</dbReference>
<dbReference type="Gene3D" id="3.40.50.1100">
    <property type="match status" value="2"/>
</dbReference>
<dbReference type="HAMAP" id="MF_01030">
    <property type="entry name" value="D_Ser_dehydrat"/>
    <property type="match status" value="1"/>
</dbReference>
<dbReference type="InterPro" id="IPR011780">
    <property type="entry name" value="D_Ser_am_lyase"/>
</dbReference>
<dbReference type="InterPro" id="IPR050147">
    <property type="entry name" value="Ser/Thr_Dehydratase"/>
</dbReference>
<dbReference type="InterPro" id="IPR000634">
    <property type="entry name" value="Ser/Thr_deHydtase_PyrdxlP-BS"/>
</dbReference>
<dbReference type="InterPro" id="IPR001926">
    <property type="entry name" value="TrpB-like_PALP"/>
</dbReference>
<dbReference type="InterPro" id="IPR036052">
    <property type="entry name" value="TrpB-like_PALP_sf"/>
</dbReference>
<dbReference type="NCBIfam" id="TIGR02035">
    <property type="entry name" value="D_Ser_am_lyase"/>
    <property type="match status" value="1"/>
</dbReference>
<dbReference type="NCBIfam" id="NF002823">
    <property type="entry name" value="PRK02991.1"/>
    <property type="match status" value="1"/>
</dbReference>
<dbReference type="PANTHER" id="PTHR48078:SF9">
    <property type="entry name" value="D-SERINE DEHYDRATASE"/>
    <property type="match status" value="1"/>
</dbReference>
<dbReference type="PANTHER" id="PTHR48078">
    <property type="entry name" value="THREONINE DEHYDRATASE, MITOCHONDRIAL-RELATED"/>
    <property type="match status" value="1"/>
</dbReference>
<dbReference type="Pfam" id="PF00291">
    <property type="entry name" value="PALP"/>
    <property type="match status" value="1"/>
</dbReference>
<dbReference type="SUPFAM" id="SSF53686">
    <property type="entry name" value="Tryptophan synthase beta subunit-like PLP-dependent enzymes"/>
    <property type="match status" value="1"/>
</dbReference>
<dbReference type="PROSITE" id="PS00165">
    <property type="entry name" value="DEHYDRATASE_SER_THR"/>
    <property type="match status" value="1"/>
</dbReference>
<comment type="catalytic activity">
    <reaction evidence="1">
        <text>D-serine = pyruvate + NH4(+)</text>
        <dbReference type="Rhea" id="RHEA:13977"/>
        <dbReference type="ChEBI" id="CHEBI:15361"/>
        <dbReference type="ChEBI" id="CHEBI:28938"/>
        <dbReference type="ChEBI" id="CHEBI:35247"/>
        <dbReference type="EC" id="4.3.1.18"/>
    </reaction>
</comment>
<comment type="cofactor">
    <cofactor evidence="1">
        <name>pyridoxal 5'-phosphate</name>
        <dbReference type="ChEBI" id="CHEBI:597326"/>
    </cofactor>
</comment>
<comment type="subunit">
    <text evidence="1">Monomer.</text>
</comment>
<comment type="similarity">
    <text evidence="1">Belongs to the serine/threonine dehydratase family. DsdA subfamily.</text>
</comment>
<name>SDHD_SALEP</name>
<protein>
    <recommendedName>
        <fullName evidence="1">D-serine dehydratase</fullName>
        <ecNumber evidence="1">4.3.1.18</ecNumber>
    </recommendedName>
    <alternativeName>
        <fullName evidence="1">D-serine deaminase</fullName>
        <shortName evidence="1">DSD</shortName>
    </alternativeName>
</protein>
<evidence type="ECO:0000255" key="1">
    <source>
        <dbReference type="HAMAP-Rule" id="MF_01030"/>
    </source>
</evidence>
<keyword id="KW-0456">Lyase</keyword>
<keyword id="KW-0663">Pyridoxal phosphate</keyword>
<gene>
    <name evidence="1" type="primary">dsdA</name>
    <name type="ordered locus">SEN3619</name>
</gene>
<sequence>MENIQKLIARYPLVEDLVALKETTWFNPGATSLAQGLPYVGLTEQDVNAAHDRLARFAPYLAKAFPQTAAAGGMIESDVVAIPAMQKRLEKEYGQTIDGEMLLKKDSHLAISGSIKARGGIYEVLTHAEKLALEAGLLTTDDDYSVLLSPEFKQFFSQYSIAVGSTGNLGLSIGIMSACIGFKVTVHMSADARAWKKAKLRSHGVTVVEYEDDYGVAVEQGRKAAQSDPNCFFIDDENSRTLFLGYAVAGQRLKAQFAQQGRVVDASHPLFVYLPCGVGGGPGGVAFGLKLAFGDNVHCFFAEPTHSPCMLLGVYTGLHDAISVQDIGIDNLTAADGLAVGRASGFVGRAMERLLDGLYTLDDQTMYDMLGWLAQEEGIRLEPSALAGMAGPQRICAAAAYQQRHGFSQTQLGNATHLVWATGGGMVPEDEMEQYLAKGR</sequence>